<dbReference type="EC" id="2.4.2.-" evidence="1"/>
<dbReference type="EC" id="2.4.2.22" evidence="1"/>
<dbReference type="EMBL" id="BX571863">
    <property type="protein sequence ID" value="CAE13535.1"/>
    <property type="molecule type" value="Genomic_DNA"/>
</dbReference>
<dbReference type="RefSeq" id="WP_011145566.1">
    <property type="nucleotide sequence ID" value="NC_005126.1"/>
</dbReference>
<dbReference type="SMR" id="Q7N7B4"/>
<dbReference type="STRING" id="243265.plu1241"/>
<dbReference type="GeneID" id="48847511"/>
<dbReference type="KEGG" id="plu:plu1241"/>
<dbReference type="eggNOG" id="COG2236">
    <property type="taxonomic scope" value="Bacteria"/>
</dbReference>
<dbReference type="HOGENOM" id="CLU_080904_3_0_6"/>
<dbReference type="OrthoDB" id="9789690at2"/>
<dbReference type="UniPathway" id="UPA00602">
    <property type="reaction ID" value="UER00658"/>
</dbReference>
<dbReference type="UniPathway" id="UPA00909">
    <property type="reaction ID" value="UER00887"/>
</dbReference>
<dbReference type="Proteomes" id="UP000002514">
    <property type="component" value="Chromosome"/>
</dbReference>
<dbReference type="GO" id="GO:0005829">
    <property type="term" value="C:cytosol"/>
    <property type="evidence" value="ECO:0007669"/>
    <property type="project" value="TreeGrafter"/>
</dbReference>
<dbReference type="GO" id="GO:0005886">
    <property type="term" value="C:plasma membrane"/>
    <property type="evidence" value="ECO:0007669"/>
    <property type="project" value="UniProtKB-SubCell"/>
</dbReference>
<dbReference type="GO" id="GO:0052657">
    <property type="term" value="F:guanine phosphoribosyltransferase activity"/>
    <property type="evidence" value="ECO:0007669"/>
    <property type="project" value="RHEA"/>
</dbReference>
<dbReference type="GO" id="GO:0004422">
    <property type="term" value="F:hypoxanthine phosphoribosyltransferase activity"/>
    <property type="evidence" value="ECO:0007669"/>
    <property type="project" value="TreeGrafter"/>
</dbReference>
<dbReference type="GO" id="GO:0000287">
    <property type="term" value="F:magnesium ion binding"/>
    <property type="evidence" value="ECO:0007669"/>
    <property type="project" value="UniProtKB-UniRule"/>
</dbReference>
<dbReference type="GO" id="GO:0000310">
    <property type="term" value="F:xanthine phosphoribosyltransferase activity"/>
    <property type="evidence" value="ECO:0007669"/>
    <property type="project" value="UniProtKB-UniRule"/>
</dbReference>
<dbReference type="GO" id="GO:0032263">
    <property type="term" value="P:GMP salvage"/>
    <property type="evidence" value="ECO:0007669"/>
    <property type="project" value="UniProtKB-UniRule"/>
</dbReference>
<dbReference type="GO" id="GO:0032264">
    <property type="term" value="P:IMP salvage"/>
    <property type="evidence" value="ECO:0007669"/>
    <property type="project" value="TreeGrafter"/>
</dbReference>
<dbReference type="GO" id="GO:0006166">
    <property type="term" value="P:purine ribonucleoside salvage"/>
    <property type="evidence" value="ECO:0007669"/>
    <property type="project" value="UniProtKB-KW"/>
</dbReference>
<dbReference type="GO" id="GO:0032265">
    <property type="term" value="P:XMP salvage"/>
    <property type="evidence" value="ECO:0007669"/>
    <property type="project" value="UniProtKB-UniRule"/>
</dbReference>
<dbReference type="CDD" id="cd06223">
    <property type="entry name" value="PRTases_typeI"/>
    <property type="match status" value="1"/>
</dbReference>
<dbReference type="FunFam" id="3.40.50.2020:FF:000009">
    <property type="entry name" value="Xanthine phosphoribosyltransferase"/>
    <property type="match status" value="1"/>
</dbReference>
<dbReference type="Gene3D" id="3.40.50.2020">
    <property type="match status" value="1"/>
</dbReference>
<dbReference type="HAMAP" id="MF_01903">
    <property type="entry name" value="XGPRT"/>
    <property type="match status" value="1"/>
</dbReference>
<dbReference type="InterPro" id="IPR000836">
    <property type="entry name" value="PRibTrfase_dom"/>
</dbReference>
<dbReference type="InterPro" id="IPR029057">
    <property type="entry name" value="PRTase-like"/>
</dbReference>
<dbReference type="InterPro" id="IPR023747">
    <property type="entry name" value="Xanthine_Guanine_PRibTrfase"/>
</dbReference>
<dbReference type="NCBIfam" id="NF006613">
    <property type="entry name" value="PRK09177.1"/>
    <property type="match status" value="1"/>
</dbReference>
<dbReference type="PANTHER" id="PTHR39563">
    <property type="entry name" value="XANTHINE PHOSPHORIBOSYLTRANSFERASE"/>
    <property type="match status" value="1"/>
</dbReference>
<dbReference type="PANTHER" id="PTHR39563:SF1">
    <property type="entry name" value="XANTHINE-GUANINE PHOSPHORIBOSYLTRANSFERASE"/>
    <property type="match status" value="1"/>
</dbReference>
<dbReference type="Pfam" id="PF00156">
    <property type="entry name" value="Pribosyltran"/>
    <property type="match status" value="1"/>
</dbReference>
<dbReference type="SUPFAM" id="SSF53271">
    <property type="entry name" value="PRTase-like"/>
    <property type="match status" value="1"/>
</dbReference>
<dbReference type="PROSITE" id="PS00103">
    <property type="entry name" value="PUR_PYR_PR_TRANSFER"/>
    <property type="match status" value="1"/>
</dbReference>
<keyword id="KW-0997">Cell inner membrane</keyword>
<keyword id="KW-1003">Cell membrane</keyword>
<keyword id="KW-0328">Glycosyltransferase</keyword>
<keyword id="KW-0460">Magnesium</keyword>
<keyword id="KW-0472">Membrane</keyword>
<keyword id="KW-0479">Metal-binding</keyword>
<keyword id="KW-0660">Purine salvage</keyword>
<keyword id="KW-1185">Reference proteome</keyword>
<keyword id="KW-0808">Transferase</keyword>
<accession>Q7N7B4</accession>
<name>XGPT_PHOLL</name>
<proteinExistence type="inferred from homology"/>
<comment type="function">
    <text evidence="1">Purine salvage pathway enzyme that catalyzes the transfer of the ribosyl-5-phosphate group from 5-phospho-alpha-D-ribose 1-diphosphate (PRPP) to the N9 position of the 6-oxopurines guanine and xanthine to form the corresponding ribonucleotides GMP (guanosine 5'-monophosphate) and XMP (xanthosine 5'-monophosphate), with the release of PPi. To a lesser extent, also acts on hypoxanthine.</text>
</comment>
<comment type="catalytic activity">
    <reaction evidence="1">
        <text>GMP + diphosphate = guanine + 5-phospho-alpha-D-ribose 1-diphosphate</text>
        <dbReference type="Rhea" id="RHEA:25424"/>
        <dbReference type="ChEBI" id="CHEBI:16235"/>
        <dbReference type="ChEBI" id="CHEBI:33019"/>
        <dbReference type="ChEBI" id="CHEBI:58017"/>
        <dbReference type="ChEBI" id="CHEBI:58115"/>
    </reaction>
    <physiologicalReaction direction="right-to-left" evidence="1">
        <dbReference type="Rhea" id="RHEA:25426"/>
    </physiologicalReaction>
</comment>
<comment type="catalytic activity">
    <reaction evidence="1">
        <text>XMP + diphosphate = xanthine + 5-phospho-alpha-D-ribose 1-diphosphate</text>
        <dbReference type="Rhea" id="RHEA:10800"/>
        <dbReference type="ChEBI" id="CHEBI:17712"/>
        <dbReference type="ChEBI" id="CHEBI:33019"/>
        <dbReference type="ChEBI" id="CHEBI:57464"/>
        <dbReference type="ChEBI" id="CHEBI:58017"/>
        <dbReference type="EC" id="2.4.2.22"/>
    </reaction>
    <physiologicalReaction direction="right-to-left" evidence="1">
        <dbReference type="Rhea" id="RHEA:10802"/>
    </physiologicalReaction>
</comment>
<comment type="catalytic activity">
    <reaction evidence="1">
        <text>IMP + diphosphate = hypoxanthine + 5-phospho-alpha-D-ribose 1-diphosphate</text>
        <dbReference type="Rhea" id="RHEA:17973"/>
        <dbReference type="ChEBI" id="CHEBI:17368"/>
        <dbReference type="ChEBI" id="CHEBI:33019"/>
        <dbReference type="ChEBI" id="CHEBI:58017"/>
        <dbReference type="ChEBI" id="CHEBI:58053"/>
    </reaction>
    <physiologicalReaction direction="right-to-left" evidence="1">
        <dbReference type="Rhea" id="RHEA:17975"/>
    </physiologicalReaction>
</comment>
<comment type="cofactor">
    <cofactor evidence="1">
        <name>Mg(2+)</name>
        <dbReference type="ChEBI" id="CHEBI:18420"/>
    </cofactor>
</comment>
<comment type="pathway">
    <text evidence="1">Purine metabolism; GMP biosynthesis via salvage pathway; GMP from guanine: step 1/1.</text>
</comment>
<comment type="pathway">
    <text evidence="1">Purine metabolism; XMP biosynthesis via salvage pathway; XMP from xanthine: step 1/1.</text>
</comment>
<comment type="subunit">
    <text evidence="1">Homotetramer.</text>
</comment>
<comment type="subcellular location">
    <subcellularLocation>
        <location evidence="1">Cell inner membrane</location>
        <topology evidence="1">Peripheral membrane protein</topology>
    </subcellularLocation>
</comment>
<comment type="similarity">
    <text evidence="1">Belongs to the purine/pyrimidine phosphoribosyltransferase family. XGPT subfamily.</text>
</comment>
<reference key="1">
    <citation type="journal article" date="2003" name="Nat. Biotechnol.">
        <title>The genome sequence of the entomopathogenic bacterium Photorhabdus luminescens.</title>
        <authorList>
            <person name="Duchaud E."/>
            <person name="Rusniok C."/>
            <person name="Frangeul L."/>
            <person name="Buchrieser C."/>
            <person name="Givaudan A."/>
            <person name="Taourit S."/>
            <person name="Bocs S."/>
            <person name="Boursaux-Eude C."/>
            <person name="Chandler M."/>
            <person name="Charles J.-F."/>
            <person name="Dassa E."/>
            <person name="Derose R."/>
            <person name="Derzelle S."/>
            <person name="Freyssinet G."/>
            <person name="Gaudriault S."/>
            <person name="Medigue C."/>
            <person name="Lanois A."/>
            <person name="Powell K."/>
            <person name="Siguier P."/>
            <person name="Vincent R."/>
            <person name="Wingate V."/>
            <person name="Zouine M."/>
            <person name="Glaser P."/>
            <person name="Boemare N."/>
            <person name="Danchin A."/>
            <person name="Kunst F."/>
        </authorList>
    </citation>
    <scope>NUCLEOTIDE SEQUENCE [LARGE SCALE GENOMIC DNA]</scope>
    <source>
        <strain>DSM 15139 / CIP 105565 / TT01</strain>
    </source>
</reference>
<feature type="chain" id="PRO_0000139679" description="Xanthine-guanine phosphoribosyltransferase">
    <location>
        <begin position="1"/>
        <end position="153"/>
    </location>
</feature>
<feature type="binding site" evidence="1">
    <location>
        <begin position="37"/>
        <end position="38"/>
    </location>
    <ligand>
        <name>5-phospho-alpha-D-ribose 1-diphosphate</name>
        <dbReference type="ChEBI" id="CHEBI:58017"/>
    </ligand>
</feature>
<feature type="binding site" evidence="1">
    <location>
        <position position="69"/>
    </location>
    <ligand>
        <name>5-phospho-alpha-D-ribose 1-diphosphate</name>
        <dbReference type="ChEBI" id="CHEBI:58017"/>
    </ligand>
</feature>
<feature type="binding site" evidence="1">
    <location>
        <position position="69"/>
    </location>
    <ligand>
        <name>GMP</name>
        <dbReference type="ChEBI" id="CHEBI:58115"/>
    </ligand>
</feature>
<feature type="binding site" evidence="1">
    <location>
        <begin position="88"/>
        <end position="96"/>
    </location>
    <ligand>
        <name>5-phospho-alpha-D-ribose 1-diphosphate</name>
        <dbReference type="ChEBI" id="CHEBI:58017"/>
    </ligand>
</feature>
<feature type="binding site" evidence="1">
    <location>
        <position position="89"/>
    </location>
    <ligand>
        <name>Mg(2+)</name>
        <dbReference type="ChEBI" id="CHEBI:18420"/>
    </ligand>
</feature>
<feature type="binding site" evidence="1">
    <location>
        <begin position="92"/>
        <end position="96"/>
    </location>
    <ligand>
        <name>GMP</name>
        <dbReference type="ChEBI" id="CHEBI:58115"/>
    </ligand>
</feature>
<feature type="binding site" evidence="1">
    <location>
        <position position="92"/>
    </location>
    <ligand>
        <name>guanine</name>
        <dbReference type="ChEBI" id="CHEBI:16235"/>
    </ligand>
</feature>
<feature type="binding site" evidence="1">
    <location>
        <position position="92"/>
    </location>
    <ligand>
        <name>xanthine</name>
        <dbReference type="ChEBI" id="CHEBI:17712"/>
    </ligand>
</feature>
<feature type="binding site" evidence="1">
    <location>
        <begin position="134"/>
        <end position="135"/>
    </location>
    <ligand>
        <name>GMP</name>
        <dbReference type="ChEBI" id="CHEBI:58115"/>
    </ligand>
</feature>
<feature type="binding site" evidence="1">
    <location>
        <position position="135"/>
    </location>
    <ligand>
        <name>guanine</name>
        <dbReference type="ChEBI" id="CHEBI:16235"/>
    </ligand>
</feature>
<feature type="binding site" evidence="1">
    <location>
        <position position="135"/>
    </location>
    <ligand>
        <name>xanthine</name>
        <dbReference type="ChEBI" id="CHEBI:17712"/>
    </ligand>
</feature>
<gene>
    <name evidence="1" type="primary">gpt</name>
    <name type="ordered locus">plu1241</name>
</gene>
<evidence type="ECO:0000255" key="1">
    <source>
        <dbReference type="HAMAP-Rule" id="MF_01903"/>
    </source>
</evidence>
<protein>
    <recommendedName>
        <fullName evidence="1">Xanthine-guanine phosphoribosyltransferase</fullName>
        <shortName evidence="1">XGPRT</shortName>
        <ecNumber evidence="1">2.4.2.-</ecNumber>
        <ecNumber evidence="1">2.4.2.22</ecNumber>
    </recommendedName>
    <alternativeName>
        <fullName evidence="1">Xanthine phosphoribosyltransferase</fullName>
    </alternativeName>
</protein>
<sequence length="153" mass="17091">MSEKYVVTWDMLQIHARKLAQRLLPVEQWKGIIAVSRGGLVPGALLARELGIRHVDTVCISSYDHNNQRELKVLKKAEGDGEGFIVVDDLVDTGGTAQAIREIYPKAHFVTIFAKPAGQPLVDDYIVDIPQDTWIEQPWDMGVVFVPPICEGR</sequence>
<organism>
    <name type="scientific">Photorhabdus laumondii subsp. laumondii (strain DSM 15139 / CIP 105565 / TT01)</name>
    <name type="common">Photorhabdus luminescens subsp. laumondii</name>
    <dbReference type="NCBI Taxonomy" id="243265"/>
    <lineage>
        <taxon>Bacteria</taxon>
        <taxon>Pseudomonadati</taxon>
        <taxon>Pseudomonadota</taxon>
        <taxon>Gammaproteobacteria</taxon>
        <taxon>Enterobacterales</taxon>
        <taxon>Morganellaceae</taxon>
        <taxon>Photorhabdus</taxon>
    </lineage>
</organism>